<sequence>MKKKTSLSEEDQALFRQLMTGTRKIKQDTIVHRPQRKKVTEVAPKRLLQEQADNSHYFSDEFQPLLNTEGSTKYVRADVSHFELKKLRRGDYSPELFLDLHGLTQQQAKQELGALIAACRREHVFCACVMHGHGKHILKQQTPLWLAQHPHIMAFHQAPKEYGGDAALLVLIEVEEWQPPELP</sequence>
<name>SMRB_KLEP3</name>
<evidence type="ECO:0000255" key="1">
    <source>
        <dbReference type="HAMAP-Rule" id="MF_01042"/>
    </source>
</evidence>
<gene>
    <name evidence="1" type="primary">smrB</name>
    <name type="ordered locus">KPK_1418</name>
</gene>
<keyword id="KW-0255">Endonuclease</keyword>
<keyword id="KW-0378">Hydrolase</keyword>
<keyword id="KW-0540">Nuclease</keyword>
<keyword id="KW-0694">RNA-binding</keyword>
<keyword id="KW-0699">rRNA-binding</keyword>
<reference key="1">
    <citation type="journal article" date="2008" name="PLoS Genet.">
        <title>Complete genome sequence of the N2-fixing broad host range endophyte Klebsiella pneumoniae 342 and virulence predictions verified in mice.</title>
        <authorList>
            <person name="Fouts D.E."/>
            <person name="Tyler H.L."/>
            <person name="DeBoy R.T."/>
            <person name="Daugherty S."/>
            <person name="Ren Q."/>
            <person name="Badger J.H."/>
            <person name="Durkin A.S."/>
            <person name="Huot H."/>
            <person name="Shrivastava S."/>
            <person name="Kothari S."/>
            <person name="Dodson R.J."/>
            <person name="Mohamoud Y."/>
            <person name="Khouri H."/>
            <person name="Roesch L.F.W."/>
            <person name="Krogfelt K.A."/>
            <person name="Struve C."/>
            <person name="Triplett E.W."/>
            <person name="Methe B.A."/>
        </authorList>
    </citation>
    <scope>NUCLEOTIDE SEQUENCE [LARGE SCALE GENOMIC DNA]</scope>
    <source>
        <strain>342</strain>
    </source>
</reference>
<feature type="chain" id="PRO_1000136045" description="Ribosome rescue factor SmrB">
    <location>
        <begin position="1"/>
        <end position="183"/>
    </location>
</feature>
<feature type="domain" description="Smr" evidence="1">
    <location>
        <begin position="98"/>
        <end position="173"/>
    </location>
</feature>
<accession>B5XVW4</accession>
<protein>
    <recommendedName>
        <fullName evidence="1">Ribosome rescue factor SmrB</fullName>
        <ecNumber evidence="1">3.1.-.-</ecNumber>
    </recommendedName>
</protein>
<comment type="function">
    <text evidence="1">Acts as a ribosome collision sensor. Detects stalled/collided disomes (pairs of ribosomes where the leading ribosome is stalled and a second ribosome has collided with it) and endonucleolytically cleaves mRNA at the 5' boundary of the stalled ribosome. Stalled/collided disomes form a new interface (primarily via the 30S subunits) that binds SmrB. Cleaved mRNA becomes available for tmRNA ligation, leading to ribosomal subunit dissociation and rescue of stalled ribosomes.</text>
</comment>
<comment type="subunit">
    <text evidence="1">Associates with collided ribosomes, but not with correctly translating polysomes.</text>
</comment>
<comment type="similarity">
    <text evidence="1">Belongs to the SmrB family.</text>
</comment>
<organism>
    <name type="scientific">Klebsiella pneumoniae (strain 342)</name>
    <dbReference type="NCBI Taxonomy" id="507522"/>
    <lineage>
        <taxon>Bacteria</taxon>
        <taxon>Pseudomonadati</taxon>
        <taxon>Pseudomonadota</taxon>
        <taxon>Gammaproteobacteria</taxon>
        <taxon>Enterobacterales</taxon>
        <taxon>Enterobacteriaceae</taxon>
        <taxon>Klebsiella/Raoultella group</taxon>
        <taxon>Klebsiella</taxon>
        <taxon>Klebsiella pneumoniae complex</taxon>
    </lineage>
</organism>
<proteinExistence type="inferred from homology"/>
<dbReference type="EC" id="3.1.-.-" evidence="1"/>
<dbReference type="EMBL" id="CP000964">
    <property type="protein sequence ID" value="ACI08646.1"/>
    <property type="molecule type" value="Genomic_DNA"/>
</dbReference>
<dbReference type="SMR" id="B5XVW4"/>
<dbReference type="KEGG" id="kpe:KPK_1418"/>
<dbReference type="HOGENOM" id="CLU_055978_4_0_6"/>
<dbReference type="BioCyc" id="KPNE507522:GI0B-1418-MONOMER"/>
<dbReference type="Proteomes" id="UP000001734">
    <property type="component" value="Chromosome"/>
</dbReference>
<dbReference type="GO" id="GO:0004521">
    <property type="term" value="F:RNA endonuclease activity"/>
    <property type="evidence" value="ECO:0007669"/>
    <property type="project" value="UniProtKB-UniRule"/>
</dbReference>
<dbReference type="GO" id="GO:0019843">
    <property type="term" value="F:rRNA binding"/>
    <property type="evidence" value="ECO:0007669"/>
    <property type="project" value="UniProtKB-UniRule"/>
</dbReference>
<dbReference type="GO" id="GO:0072344">
    <property type="term" value="P:rescue of stalled ribosome"/>
    <property type="evidence" value="ECO:0007669"/>
    <property type="project" value="UniProtKB-UniRule"/>
</dbReference>
<dbReference type="Gene3D" id="3.30.1370.110">
    <property type="match status" value="1"/>
</dbReference>
<dbReference type="HAMAP" id="MF_01042">
    <property type="entry name" value="SmrB"/>
    <property type="match status" value="1"/>
</dbReference>
<dbReference type="InterPro" id="IPR002625">
    <property type="entry name" value="Smr_dom"/>
</dbReference>
<dbReference type="InterPro" id="IPR036063">
    <property type="entry name" value="Smr_dom_sf"/>
</dbReference>
<dbReference type="InterPro" id="IPR022990">
    <property type="entry name" value="SmrB-like"/>
</dbReference>
<dbReference type="NCBIfam" id="NF003432">
    <property type="entry name" value="PRK04946.1"/>
    <property type="match status" value="1"/>
</dbReference>
<dbReference type="PANTHER" id="PTHR35562">
    <property type="entry name" value="DNA ENDONUCLEASE SMRA-RELATED"/>
    <property type="match status" value="1"/>
</dbReference>
<dbReference type="PANTHER" id="PTHR35562:SF1">
    <property type="entry name" value="UPF0115 PROTEIN YFCN"/>
    <property type="match status" value="1"/>
</dbReference>
<dbReference type="Pfam" id="PF01713">
    <property type="entry name" value="Smr"/>
    <property type="match status" value="1"/>
</dbReference>
<dbReference type="SMART" id="SM00463">
    <property type="entry name" value="SMR"/>
    <property type="match status" value="1"/>
</dbReference>
<dbReference type="SUPFAM" id="SSF160443">
    <property type="entry name" value="SMR domain-like"/>
    <property type="match status" value="1"/>
</dbReference>
<dbReference type="PROSITE" id="PS50828">
    <property type="entry name" value="SMR"/>
    <property type="match status" value="1"/>
</dbReference>